<keyword id="KW-0002">3D-structure</keyword>
<keyword id="KW-0378">Hydrolase</keyword>
<keyword id="KW-0488">Methylation</keyword>
<keyword id="KW-0496">Mitochondrion</keyword>
<keyword id="KW-0648">Protein biosynthesis</keyword>
<keyword id="KW-1267">Proteomics identification</keyword>
<keyword id="KW-1185">Reference proteome</keyword>
<keyword id="KW-0687">Ribonucleoprotein</keyword>
<keyword id="KW-0689">Ribosomal protein</keyword>
<keyword id="KW-0809">Transit peptide</keyword>
<organism>
    <name type="scientific">Homo sapiens</name>
    <name type="common">Human</name>
    <dbReference type="NCBI Taxonomy" id="9606"/>
    <lineage>
        <taxon>Eukaryota</taxon>
        <taxon>Metazoa</taxon>
        <taxon>Chordata</taxon>
        <taxon>Craniata</taxon>
        <taxon>Vertebrata</taxon>
        <taxon>Euteleostomi</taxon>
        <taxon>Mammalia</taxon>
        <taxon>Eutheria</taxon>
        <taxon>Euarchontoglires</taxon>
        <taxon>Primates</taxon>
        <taxon>Haplorrhini</taxon>
        <taxon>Catarrhini</taxon>
        <taxon>Hominidae</taxon>
        <taxon>Homo</taxon>
    </lineage>
</organism>
<dbReference type="EC" id="3.1.1.29" evidence="2"/>
<dbReference type="EMBL" id="X81788">
    <property type="protein sequence ID" value="CAA57387.1"/>
    <property type="molecule type" value="mRNA"/>
</dbReference>
<dbReference type="EMBL" id="BT007111">
    <property type="protein sequence ID" value="AAP35775.1"/>
    <property type="molecule type" value="mRNA"/>
</dbReference>
<dbReference type="EMBL" id="AK222553">
    <property type="protein sequence ID" value="BAD96273.1"/>
    <property type="molecule type" value="mRNA"/>
</dbReference>
<dbReference type="EMBL" id="AK314138">
    <property type="protein sequence ID" value="BAG36828.1"/>
    <property type="molecule type" value="mRNA"/>
</dbReference>
<dbReference type="EMBL" id="CH471099">
    <property type="protein sequence ID" value="EAW89227.1"/>
    <property type="molecule type" value="Genomic_DNA"/>
</dbReference>
<dbReference type="EMBL" id="BC015335">
    <property type="protein sequence ID" value="AAH15335.1"/>
    <property type="molecule type" value="mRNA"/>
</dbReference>
<dbReference type="CCDS" id="CCDS11711.1"/>
<dbReference type="PIR" id="S63540">
    <property type="entry name" value="S63540"/>
</dbReference>
<dbReference type="RefSeq" id="NP_001290194.1">
    <property type="nucleotide sequence ID" value="NM_001303265.1"/>
</dbReference>
<dbReference type="RefSeq" id="NP_001536.1">
    <property type="nucleotide sequence ID" value="NM_001545.3"/>
</dbReference>
<dbReference type="PDB" id="3J7Y">
    <property type="method" value="EM"/>
    <property type="resolution" value="3.40 A"/>
    <property type="chains" value="p=1-206"/>
</dbReference>
<dbReference type="PDB" id="3J9M">
    <property type="method" value="EM"/>
    <property type="resolution" value="3.50 A"/>
    <property type="chains" value="p=1-206"/>
</dbReference>
<dbReference type="PDB" id="5OOL">
    <property type="method" value="EM"/>
    <property type="resolution" value="3.06 A"/>
    <property type="chains" value="p=1-206"/>
</dbReference>
<dbReference type="PDB" id="5OOM">
    <property type="method" value="EM"/>
    <property type="resolution" value="3.03 A"/>
    <property type="chains" value="p=1-206"/>
</dbReference>
<dbReference type="PDB" id="6I9R">
    <property type="method" value="EM"/>
    <property type="resolution" value="3.90 A"/>
    <property type="chains" value="p=1-206"/>
</dbReference>
<dbReference type="PDB" id="6NU2">
    <property type="method" value="EM"/>
    <property type="resolution" value="3.90 A"/>
    <property type="chains" value="p=38-193"/>
</dbReference>
<dbReference type="PDB" id="6NU3">
    <property type="method" value="EM"/>
    <property type="resolution" value="4.40 A"/>
    <property type="chains" value="p=1-206"/>
</dbReference>
<dbReference type="PDB" id="6VLZ">
    <property type="method" value="EM"/>
    <property type="resolution" value="2.97 A"/>
    <property type="chains" value="p=1-206"/>
</dbReference>
<dbReference type="PDB" id="6VMI">
    <property type="method" value="EM"/>
    <property type="resolution" value="2.96 A"/>
    <property type="chains" value="p=1-206"/>
</dbReference>
<dbReference type="PDB" id="6ZM5">
    <property type="method" value="EM"/>
    <property type="resolution" value="2.89 A"/>
    <property type="chains" value="p=1-206"/>
</dbReference>
<dbReference type="PDB" id="6ZM6">
    <property type="method" value="EM"/>
    <property type="resolution" value="2.59 A"/>
    <property type="chains" value="p=1-206"/>
</dbReference>
<dbReference type="PDB" id="6ZS9">
    <property type="method" value="EM"/>
    <property type="resolution" value="4.00 A"/>
    <property type="chains" value="p=1-206"/>
</dbReference>
<dbReference type="PDB" id="6ZSA">
    <property type="method" value="EM"/>
    <property type="resolution" value="4.00 A"/>
    <property type="chains" value="p=1-206"/>
</dbReference>
<dbReference type="PDB" id="6ZSB">
    <property type="method" value="EM"/>
    <property type="resolution" value="4.50 A"/>
    <property type="chains" value="p=1-206"/>
</dbReference>
<dbReference type="PDB" id="6ZSC">
    <property type="method" value="EM"/>
    <property type="resolution" value="3.50 A"/>
    <property type="chains" value="p=1-206"/>
</dbReference>
<dbReference type="PDB" id="6ZSD">
    <property type="method" value="EM"/>
    <property type="resolution" value="3.70 A"/>
    <property type="chains" value="p=1-206"/>
</dbReference>
<dbReference type="PDB" id="6ZSE">
    <property type="method" value="EM"/>
    <property type="resolution" value="5.00 A"/>
    <property type="chains" value="p=1-206"/>
</dbReference>
<dbReference type="PDB" id="6ZSG">
    <property type="method" value="EM"/>
    <property type="resolution" value="4.00 A"/>
    <property type="chains" value="p=1-206"/>
</dbReference>
<dbReference type="PDB" id="7A5F">
    <property type="method" value="EM"/>
    <property type="resolution" value="4.40 A"/>
    <property type="chains" value="p3=1-206"/>
</dbReference>
<dbReference type="PDB" id="7A5G">
    <property type="method" value="EM"/>
    <property type="resolution" value="4.33 A"/>
    <property type="chains" value="p3=1-206"/>
</dbReference>
<dbReference type="PDB" id="7A5H">
    <property type="method" value="EM"/>
    <property type="resolution" value="3.30 A"/>
    <property type="chains" value="p=1-206"/>
</dbReference>
<dbReference type="PDB" id="7A5I">
    <property type="method" value="EM"/>
    <property type="resolution" value="3.70 A"/>
    <property type="chains" value="p3=1-206"/>
</dbReference>
<dbReference type="PDB" id="7A5J">
    <property type="method" value="EM"/>
    <property type="resolution" value="3.10 A"/>
    <property type="chains" value="p=1-206"/>
</dbReference>
<dbReference type="PDB" id="7A5K">
    <property type="method" value="EM"/>
    <property type="resolution" value="3.70 A"/>
    <property type="chains" value="p3=1-206"/>
</dbReference>
<dbReference type="PDB" id="7L08">
    <property type="method" value="EM"/>
    <property type="resolution" value="3.49 A"/>
    <property type="chains" value="p=1-206"/>
</dbReference>
<dbReference type="PDB" id="7L20">
    <property type="method" value="EM"/>
    <property type="resolution" value="3.15 A"/>
    <property type="chains" value="p=1-206"/>
</dbReference>
<dbReference type="PDB" id="7NQL">
    <property type="method" value="EM"/>
    <property type="resolution" value="3.40 A"/>
    <property type="chains" value="BL=30-206"/>
</dbReference>
<dbReference type="PDB" id="7O9K">
    <property type="method" value="EM"/>
    <property type="resolution" value="3.10 A"/>
    <property type="chains" value="p=1-206"/>
</dbReference>
<dbReference type="PDB" id="7O9M">
    <property type="method" value="EM"/>
    <property type="resolution" value="2.50 A"/>
    <property type="chains" value="p=1-205"/>
</dbReference>
<dbReference type="PDB" id="7ODR">
    <property type="method" value="EM"/>
    <property type="resolution" value="2.90 A"/>
    <property type="chains" value="p=1-206"/>
</dbReference>
<dbReference type="PDB" id="7ODS">
    <property type="method" value="EM"/>
    <property type="resolution" value="3.10 A"/>
    <property type="chains" value="p=1-206"/>
</dbReference>
<dbReference type="PDB" id="7ODT">
    <property type="method" value="EM"/>
    <property type="resolution" value="3.10 A"/>
    <property type="chains" value="p=1-206"/>
</dbReference>
<dbReference type="PDB" id="7OF0">
    <property type="method" value="EM"/>
    <property type="resolution" value="2.20 A"/>
    <property type="chains" value="p=1-206"/>
</dbReference>
<dbReference type="PDB" id="7OF2">
    <property type="method" value="EM"/>
    <property type="resolution" value="2.70 A"/>
    <property type="chains" value="p=1-206"/>
</dbReference>
<dbReference type="PDB" id="7OF3">
    <property type="method" value="EM"/>
    <property type="resolution" value="2.70 A"/>
    <property type="chains" value="p=1-206"/>
</dbReference>
<dbReference type="PDB" id="7OF4">
    <property type="method" value="EM"/>
    <property type="resolution" value="2.70 A"/>
    <property type="chains" value="p=1-206"/>
</dbReference>
<dbReference type="PDB" id="7OF5">
    <property type="method" value="EM"/>
    <property type="resolution" value="2.90 A"/>
    <property type="chains" value="p=1-206"/>
</dbReference>
<dbReference type="PDB" id="7OF6">
    <property type="method" value="EM"/>
    <property type="resolution" value="2.60 A"/>
    <property type="chains" value="p=1-206"/>
</dbReference>
<dbReference type="PDB" id="7OF7">
    <property type="method" value="EM"/>
    <property type="resolution" value="2.50 A"/>
    <property type="chains" value="p=1-206"/>
</dbReference>
<dbReference type="PDB" id="7OG4">
    <property type="method" value="EM"/>
    <property type="resolution" value="3.80 A"/>
    <property type="chains" value="p=1-206"/>
</dbReference>
<dbReference type="PDB" id="7OI6">
    <property type="method" value="EM"/>
    <property type="resolution" value="5.70 A"/>
    <property type="chains" value="p=1-206"/>
</dbReference>
<dbReference type="PDB" id="7OI7">
    <property type="method" value="EM"/>
    <property type="resolution" value="3.50 A"/>
    <property type="chains" value="p=1-206"/>
</dbReference>
<dbReference type="PDB" id="7OI8">
    <property type="method" value="EM"/>
    <property type="resolution" value="3.50 A"/>
    <property type="chains" value="p=1-206"/>
</dbReference>
<dbReference type="PDB" id="7OI9">
    <property type="method" value="EM"/>
    <property type="resolution" value="3.30 A"/>
    <property type="chains" value="p=1-206"/>
</dbReference>
<dbReference type="PDB" id="7OIA">
    <property type="method" value="EM"/>
    <property type="resolution" value="3.20 A"/>
    <property type="chains" value="p=1-206"/>
</dbReference>
<dbReference type="PDB" id="7OIB">
    <property type="method" value="EM"/>
    <property type="resolution" value="3.30 A"/>
    <property type="chains" value="p=1-206"/>
</dbReference>
<dbReference type="PDB" id="7OIC">
    <property type="method" value="EM"/>
    <property type="resolution" value="3.10 A"/>
    <property type="chains" value="p=1-206"/>
</dbReference>
<dbReference type="PDB" id="7OID">
    <property type="method" value="EM"/>
    <property type="resolution" value="3.70 A"/>
    <property type="chains" value="p=1-206"/>
</dbReference>
<dbReference type="PDB" id="7OIE">
    <property type="method" value="EM"/>
    <property type="resolution" value="3.50 A"/>
    <property type="chains" value="p=1-206"/>
</dbReference>
<dbReference type="PDB" id="7PD3">
    <property type="method" value="EM"/>
    <property type="resolution" value="3.40 A"/>
    <property type="chains" value="p=1-206"/>
</dbReference>
<dbReference type="PDB" id="7PO4">
    <property type="method" value="EM"/>
    <property type="resolution" value="2.56 A"/>
    <property type="chains" value="p=1-206"/>
</dbReference>
<dbReference type="PDB" id="7QH6">
    <property type="method" value="EM"/>
    <property type="resolution" value="3.08 A"/>
    <property type="chains" value="p=1-206"/>
</dbReference>
<dbReference type="PDB" id="7QH7">
    <property type="method" value="EM"/>
    <property type="resolution" value="2.89 A"/>
    <property type="chains" value="p=38-193"/>
</dbReference>
<dbReference type="PDB" id="7QI4">
    <property type="method" value="EM"/>
    <property type="resolution" value="2.21 A"/>
    <property type="chains" value="p=1-206"/>
</dbReference>
<dbReference type="PDB" id="7QI5">
    <property type="method" value="EM"/>
    <property type="resolution" value="2.63 A"/>
    <property type="chains" value="p=1-206"/>
</dbReference>
<dbReference type="PDB" id="7QI6">
    <property type="method" value="EM"/>
    <property type="resolution" value="2.98 A"/>
    <property type="chains" value="p=1-206"/>
</dbReference>
<dbReference type="PDB" id="8ANY">
    <property type="method" value="EM"/>
    <property type="resolution" value="2.85 A"/>
    <property type="chains" value="p=1-206"/>
</dbReference>
<dbReference type="PDB" id="8K2A">
    <property type="method" value="EM"/>
    <property type="resolution" value="2.90 A"/>
    <property type="chains" value="L7=1-206"/>
</dbReference>
<dbReference type="PDB" id="8K2B">
    <property type="method" value="EM"/>
    <property type="resolution" value="3.40 A"/>
    <property type="chains" value="L7=1-206"/>
</dbReference>
<dbReference type="PDB" id="8OIR">
    <property type="method" value="EM"/>
    <property type="resolution" value="3.10 A"/>
    <property type="chains" value="Bf=1-206"/>
</dbReference>
<dbReference type="PDB" id="8OIT">
    <property type="method" value="EM"/>
    <property type="resolution" value="2.90 A"/>
    <property type="chains" value="Bf=1-206"/>
</dbReference>
<dbReference type="PDB" id="8PK0">
    <property type="method" value="EM"/>
    <property type="resolution" value="3.03 A"/>
    <property type="chains" value="p=1-206"/>
</dbReference>
<dbReference type="PDB" id="8QSJ">
    <property type="method" value="EM"/>
    <property type="resolution" value="3.00 A"/>
    <property type="chains" value="p=1-206"/>
</dbReference>
<dbReference type="PDB" id="8QU5">
    <property type="method" value="EM"/>
    <property type="resolution" value="2.42 A"/>
    <property type="chains" value="p=1-206"/>
</dbReference>
<dbReference type="PDB" id="8RRI">
    <property type="method" value="EM"/>
    <property type="resolution" value="2.40 A"/>
    <property type="chains" value="p=1-206"/>
</dbReference>
<dbReference type="PDB" id="8XT0">
    <property type="method" value="EM"/>
    <property type="resolution" value="3.20 A"/>
    <property type="chains" value="L7=1-206"/>
</dbReference>
<dbReference type="PDB" id="8XT1">
    <property type="method" value="EM"/>
    <property type="resolution" value="3.10 A"/>
    <property type="chains" value="L7=1-206"/>
</dbReference>
<dbReference type="PDB" id="8XT2">
    <property type="method" value="EM"/>
    <property type="resolution" value="3.30 A"/>
    <property type="chains" value="L7=1-206"/>
</dbReference>
<dbReference type="PDB" id="8XT3">
    <property type="method" value="EM"/>
    <property type="resolution" value="3.10 A"/>
    <property type="chains" value="L7=1-206"/>
</dbReference>
<dbReference type="PDBsum" id="3J7Y"/>
<dbReference type="PDBsum" id="3J9M"/>
<dbReference type="PDBsum" id="5OOL"/>
<dbReference type="PDBsum" id="5OOM"/>
<dbReference type="PDBsum" id="6I9R"/>
<dbReference type="PDBsum" id="6NU2"/>
<dbReference type="PDBsum" id="6NU3"/>
<dbReference type="PDBsum" id="6VLZ"/>
<dbReference type="PDBsum" id="6VMI"/>
<dbReference type="PDBsum" id="6ZM5"/>
<dbReference type="PDBsum" id="6ZM6"/>
<dbReference type="PDBsum" id="6ZS9"/>
<dbReference type="PDBsum" id="6ZSA"/>
<dbReference type="PDBsum" id="6ZSB"/>
<dbReference type="PDBsum" id="6ZSC"/>
<dbReference type="PDBsum" id="6ZSD"/>
<dbReference type="PDBsum" id="6ZSE"/>
<dbReference type="PDBsum" id="6ZSG"/>
<dbReference type="PDBsum" id="7A5F"/>
<dbReference type="PDBsum" id="7A5G"/>
<dbReference type="PDBsum" id="7A5H"/>
<dbReference type="PDBsum" id="7A5I"/>
<dbReference type="PDBsum" id="7A5J"/>
<dbReference type="PDBsum" id="7A5K"/>
<dbReference type="PDBsum" id="7L08"/>
<dbReference type="PDBsum" id="7L20"/>
<dbReference type="PDBsum" id="7NQL"/>
<dbReference type="PDBsum" id="7O9K"/>
<dbReference type="PDBsum" id="7O9M"/>
<dbReference type="PDBsum" id="7ODR"/>
<dbReference type="PDBsum" id="7ODS"/>
<dbReference type="PDBsum" id="7ODT"/>
<dbReference type="PDBsum" id="7OF0"/>
<dbReference type="PDBsum" id="7OF2"/>
<dbReference type="PDBsum" id="7OF3"/>
<dbReference type="PDBsum" id="7OF4"/>
<dbReference type="PDBsum" id="7OF5"/>
<dbReference type="PDBsum" id="7OF6"/>
<dbReference type="PDBsum" id="7OF7"/>
<dbReference type="PDBsum" id="7OG4"/>
<dbReference type="PDBsum" id="7OI6"/>
<dbReference type="PDBsum" id="7OI7"/>
<dbReference type="PDBsum" id="7OI8"/>
<dbReference type="PDBsum" id="7OI9"/>
<dbReference type="PDBsum" id="7OIA"/>
<dbReference type="PDBsum" id="7OIB"/>
<dbReference type="PDBsum" id="7OIC"/>
<dbReference type="PDBsum" id="7OID"/>
<dbReference type="PDBsum" id="7OIE"/>
<dbReference type="PDBsum" id="7PD3"/>
<dbReference type="PDBsum" id="7PO4"/>
<dbReference type="PDBsum" id="7QH6"/>
<dbReference type="PDBsum" id="7QH7"/>
<dbReference type="PDBsum" id="7QI4"/>
<dbReference type="PDBsum" id="7QI5"/>
<dbReference type="PDBsum" id="7QI6"/>
<dbReference type="PDBsum" id="8ANY"/>
<dbReference type="PDBsum" id="8K2A"/>
<dbReference type="PDBsum" id="8K2B"/>
<dbReference type="PDBsum" id="8OIR"/>
<dbReference type="PDBsum" id="8OIT"/>
<dbReference type="PDBsum" id="8PK0"/>
<dbReference type="PDBsum" id="8QSJ"/>
<dbReference type="PDBsum" id="8QU5"/>
<dbReference type="PDBsum" id="8RRI"/>
<dbReference type="PDBsum" id="8XT0"/>
<dbReference type="PDBsum" id="8XT1"/>
<dbReference type="PDBsum" id="8XT2"/>
<dbReference type="PDBsum" id="8XT3"/>
<dbReference type="EMDB" id="EMD-0514"/>
<dbReference type="EMDB" id="EMD-0515"/>
<dbReference type="EMDB" id="EMD-11278"/>
<dbReference type="EMDB" id="EMD-11279"/>
<dbReference type="EMDB" id="EMD-11390"/>
<dbReference type="EMDB" id="EMD-11391"/>
<dbReference type="EMDB" id="EMD-11392"/>
<dbReference type="EMDB" id="EMD-11393"/>
<dbReference type="EMDB" id="EMD-11394"/>
<dbReference type="EMDB" id="EMD-11395"/>
<dbReference type="EMDB" id="EMD-11397"/>
<dbReference type="EMDB" id="EMD-11641"/>
<dbReference type="EMDB" id="EMD-11642"/>
<dbReference type="EMDB" id="EMD-11643"/>
<dbReference type="EMDB" id="EMD-11644"/>
<dbReference type="EMDB" id="EMD-11645"/>
<dbReference type="EMDB" id="EMD-11646"/>
<dbReference type="EMDB" id="EMD-12529"/>
<dbReference type="EMDB" id="EMD-12763"/>
<dbReference type="EMDB" id="EMD-12764"/>
<dbReference type="EMDB" id="EMD-12845"/>
<dbReference type="EMDB" id="EMD-12846"/>
<dbReference type="EMDB" id="EMD-12847"/>
<dbReference type="EMDB" id="EMD-12865"/>
<dbReference type="EMDB" id="EMD-12867"/>
<dbReference type="EMDB" id="EMD-12868"/>
<dbReference type="EMDB" id="EMD-12869"/>
<dbReference type="EMDB" id="EMD-12870"/>
<dbReference type="EMDB" id="EMD-12871"/>
<dbReference type="EMDB" id="EMD-12872"/>
<dbReference type="EMDB" id="EMD-12877"/>
<dbReference type="EMDB" id="EMD-12919"/>
<dbReference type="EMDB" id="EMD-12920"/>
<dbReference type="EMDB" id="EMD-12921"/>
<dbReference type="EMDB" id="EMD-12922"/>
<dbReference type="EMDB" id="EMD-12923"/>
<dbReference type="EMDB" id="EMD-12924"/>
<dbReference type="EMDB" id="EMD-12925"/>
<dbReference type="EMDB" id="EMD-12926"/>
<dbReference type="EMDB" id="EMD-12927"/>
<dbReference type="EMDB" id="EMD-13329"/>
<dbReference type="EMDB" id="EMD-13562"/>
<dbReference type="EMDB" id="EMD-13965"/>
<dbReference type="EMDB" id="EMD-13967"/>
<dbReference type="EMDB" id="EMD-13980"/>
<dbReference type="EMDB" id="EMD-13981"/>
<dbReference type="EMDB" id="EMD-13982"/>
<dbReference type="EMDB" id="EMD-15544"/>
<dbReference type="EMDB" id="EMD-16897"/>
<dbReference type="EMDB" id="EMD-16899"/>
<dbReference type="EMDB" id="EMD-17719"/>
<dbReference type="EMDB" id="EMD-19460"/>
<dbReference type="EMDB" id="EMD-21233"/>
<dbReference type="EMDB" id="EMD-21242"/>
<dbReference type="EMDB" id="EMD-23096"/>
<dbReference type="EMDB" id="EMD-23121"/>
<dbReference type="EMDB" id="EMD-36836"/>
<dbReference type="EMDB" id="EMD-36837"/>
<dbReference type="EMDB" id="EMD-3842"/>
<dbReference type="EMDB" id="EMD-3843"/>
<dbReference type="EMDB" id="EMD-38632"/>
<dbReference type="EMDB" id="EMD-38633"/>
<dbReference type="EMDB" id="EMD-38634"/>
<dbReference type="EMDB" id="EMD-38635"/>
<dbReference type="EMDB" id="EMD-4434"/>
<dbReference type="SMR" id="Q14197"/>
<dbReference type="BioGRID" id="109622">
    <property type="interactions" value="426"/>
</dbReference>
<dbReference type="ComplexPortal" id="CPX-5226">
    <property type="entry name" value="39S mitochondrial large ribosomal subunit"/>
</dbReference>
<dbReference type="FunCoup" id="Q14197">
    <property type="interactions" value="2094"/>
</dbReference>
<dbReference type="IntAct" id="Q14197">
    <property type="interactions" value="244"/>
</dbReference>
<dbReference type="MINT" id="Q14197"/>
<dbReference type="STRING" id="9606.ENSP00000301585"/>
<dbReference type="GlyGen" id="Q14197">
    <property type="glycosylation" value="1 site, 1 O-linked glycan (1 site)"/>
</dbReference>
<dbReference type="iPTMnet" id="Q14197"/>
<dbReference type="PhosphoSitePlus" id="Q14197"/>
<dbReference type="SwissPalm" id="Q14197"/>
<dbReference type="BioMuta" id="MRPL58"/>
<dbReference type="jPOST" id="Q14197"/>
<dbReference type="MassIVE" id="Q14197"/>
<dbReference type="PaxDb" id="9606-ENSP00000301585"/>
<dbReference type="PeptideAtlas" id="Q14197"/>
<dbReference type="ProteomicsDB" id="59919"/>
<dbReference type="Pumba" id="Q14197"/>
<dbReference type="TopDownProteomics" id="Q14197"/>
<dbReference type="Antibodypedia" id="1066">
    <property type="antibodies" value="335 antibodies from 30 providers"/>
</dbReference>
<dbReference type="DNASU" id="3396"/>
<dbReference type="Ensembl" id="ENST00000301585.10">
    <property type="protein sequence ID" value="ENSP00000301585.5"/>
    <property type="gene ID" value="ENSG00000167862.10"/>
</dbReference>
<dbReference type="GeneID" id="3396"/>
<dbReference type="KEGG" id="hsa:3396"/>
<dbReference type="MANE-Select" id="ENST00000301585.10">
    <property type="protein sequence ID" value="ENSP00000301585.5"/>
    <property type="RefSeq nucleotide sequence ID" value="NM_001545.3"/>
    <property type="RefSeq protein sequence ID" value="NP_001536.1"/>
</dbReference>
<dbReference type="UCSC" id="uc002jmm.4">
    <property type="organism name" value="human"/>
</dbReference>
<dbReference type="AGR" id="HGNC:5359"/>
<dbReference type="CTD" id="3396"/>
<dbReference type="DisGeNET" id="3396"/>
<dbReference type="GeneCards" id="MRPL58"/>
<dbReference type="HGNC" id="HGNC:5359">
    <property type="gene designation" value="MRPL58"/>
</dbReference>
<dbReference type="HPA" id="ENSG00000167862">
    <property type="expression patterns" value="Low tissue specificity"/>
</dbReference>
<dbReference type="MIM" id="603000">
    <property type="type" value="gene"/>
</dbReference>
<dbReference type="neXtProt" id="NX_Q14197"/>
<dbReference type="OpenTargets" id="ENSG00000167862"/>
<dbReference type="PharmGKB" id="PA29607"/>
<dbReference type="VEuPathDB" id="HostDB:ENSG00000167862"/>
<dbReference type="eggNOG" id="KOG3429">
    <property type="taxonomic scope" value="Eukaryota"/>
</dbReference>
<dbReference type="GeneTree" id="ENSGT00390000013268"/>
<dbReference type="HOGENOM" id="CLU_089470_6_1_1"/>
<dbReference type="InParanoid" id="Q14197"/>
<dbReference type="OMA" id="GGQNVNC"/>
<dbReference type="OrthoDB" id="270639at2759"/>
<dbReference type="PAN-GO" id="Q14197">
    <property type="GO annotations" value="4 GO annotations based on evolutionary models"/>
</dbReference>
<dbReference type="PhylomeDB" id="Q14197"/>
<dbReference type="TreeFam" id="TF315161"/>
<dbReference type="BRENDA" id="3.1.1.29">
    <property type="organism ID" value="2681"/>
</dbReference>
<dbReference type="PathwayCommons" id="Q14197"/>
<dbReference type="Reactome" id="R-HSA-5368286">
    <property type="pathway name" value="Mitochondrial translation initiation"/>
</dbReference>
<dbReference type="Reactome" id="R-HSA-5389840">
    <property type="pathway name" value="Mitochondrial translation elongation"/>
</dbReference>
<dbReference type="Reactome" id="R-HSA-5419276">
    <property type="pathway name" value="Mitochondrial translation termination"/>
</dbReference>
<dbReference type="SignaLink" id="Q14197"/>
<dbReference type="SIGNOR" id="Q14197"/>
<dbReference type="BioGRID-ORCS" id="3396">
    <property type="hits" value="151 hits in 1169 CRISPR screens"/>
</dbReference>
<dbReference type="ChiTaRS" id="MRPL58">
    <property type="organism name" value="human"/>
</dbReference>
<dbReference type="EvolutionaryTrace" id="Q14197"/>
<dbReference type="GenomeRNAi" id="3396"/>
<dbReference type="Pharos" id="Q14197">
    <property type="development level" value="Tbio"/>
</dbReference>
<dbReference type="PRO" id="PR:Q14197"/>
<dbReference type="Proteomes" id="UP000005640">
    <property type="component" value="Chromosome 17"/>
</dbReference>
<dbReference type="RNAct" id="Q14197">
    <property type="molecule type" value="protein"/>
</dbReference>
<dbReference type="Bgee" id="ENSG00000167862">
    <property type="expression patterns" value="Expressed in triceps brachii and 204 other cell types or tissues"/>
</dbReference>
<dbReference type="ExpressionAtlas" id="Q14197">
    <property type="expression patterns" value="baseline and differential"/>
</dbReference>
<dbReference type="GO" id="GO:0005743">
    <property type="term" value="C:mitochondrial inner membrane"/>
    <property type="evidence" value="ECO:0000304"/>
    <property type="project" value="Reactome"/>
</dbReference>
<dbReference type="GO" id="GO:0005762">
    <property type="term" value="C:mitochondrial large ribosomal subunit"/>
    <property type="evidence" value="ECO:0000314"/>
    <property type="project" value="UniProtKB"/>
</dbReference>
<dbReference type="GO" id="GO:0005759">
    <property type="term" value="C:mitochondrial matrix"/>
    <property type="evidence" value="ECO:0000304"/>
    <property type="project" value="FlyBase"/>
</dbReference>
<dbReference type="GO" id="GO:0005739">
    <property type="term" value="C:mitochondrion"/>
    <property type="evidence" value="ECO:0000314"/>
    <property type="project" value="UniProtKB"/>
</dbReference>
<dbReference type="GO" id="GO:0005654">
    <property type="term" value="C:nucleoplasm"/>
    <property type="evidence" value="ECO:0000314"/>
    <property type="project" value="HPA"/>
</dbReference>
<dbReference type="GO" id="GO:0005886">
    <property type="term" value="C:plasma membrane"/>
    <property type="evidence" value="ECO:0000314"/>
    <property type="project" value="HPA"/>
</dbReference>
<dbReference type="GO" id="GO:0004045">
    <property type="term" value="F:peptidyl-tRNA hydrolase activity"/>
    <property type="evidence" value="ECO:0000314"/>
    <property type="project" value="UniProtKB"/>
</dbReference>
<dbReference type="GO" id="GO:0003747">
    <property type="term" value="F:translation release factor activity"/>
    <property type="evidence" value="ECO:0000314"/>
    <property type="project" value="FlyBase"/>
</dbReference>
<dbReference type="GO" id="GO:0016150">
    <property type="term" value="F:translation release factor activity, codon nonspecific"/>
    <property type="evidence" value="ECO:0000314"/>
    <property type="project" value="UniProtKB"/>
</dbReference>
<dbReference type="GO" id="GO:0032543">
    <property type="term" value="P:mitochondrial translation"/>
    <property type="evidence" value="ECO:0000303"/>
    <property type="project" value="ComplexPortal"/>
</dbReference>
<dbReference type="GO" id="GO:0070126">
    <property type="term" value="P:mitochondrial translational termination"/>
    <property type="evidence" value="ECO:0000314"/>
    <property type="project" value="UniProtKB"/>
</dbReference>
<dbReference type="GO" id="GO:0072344">
    <property type="term" value="P:rescue of stalled ribosome"/>
    <property type="evidence" value="ECO:0000314"/>
    <property type="project" value="UniProtKB"/>
</dbReference>
<dbReference type="FunFam" id="3.30.160.20:FF:000050">
    <property type="entry name" value="Peptidyl-tRNA hydrolase ICT1, mitochondrial"/>
    <property type="match status" value="1"/>
</dbReference>
<dbReference type="Gene3D" id="3.30.160.20">
    <property type="match status" value="1"/>
</dbReference>
<dbReference type="InterPro" id="IPR052104">
    <property type="entry name" value="Mito_Release_Factor_mL62"/>
</dbReference>
<dbReference type="InterPro" id="IPR000352">
    <property type="entry name" value="Pep_chain_release_fac_I"/>
</dbReference>
<dbReference type="PANTHER" id="PTHR11075:SF54">
    <property type="entry name" value="LARGE RIBOSOMAL SUBUNIT PROTEIN ML62"/>
    <property type="match status" value="1"/>
</dbReference>
<dbReference type="PANTHER" id="PTHR11075">
    <property type="entry name" value="PEPTIDE CHAIN RELEASE FACTOR"/>
    <property type="match status" value="1"/>
</dbReference>
<dbReference type="Pfam" id="PF00472">
    <property type="entry name" value="RF-1"/>
    <property type="match status" value="1"/>
</dbReference>
<dbReference type="SUPFAM" id="SSF110916">
    <property type="entry name" value="Peptidyl-tRNA hydrolase domain-like"/>
    <property type="match status" value="1"/>
</dbReference>
<protein>
    <recommendedName>
        <fullName evidence="12">Large ribosomal subunit protein mL62</fullName>
    </recommendedName>
    <alternativeName>
        <fullName evidence="16">39S ribosomal protein L58, mitochondrial</fullName>
        <shortName>MRP-L58</shortName>
    </alternativeName>
    <alternativeName>
        <fullName>Digestion substraction 1</fullName>
        <shortName>DS-1</shortName>
    </alternativeName>
    <alternativeName>
        <fullName>Immature colon carcinoma transcript 1 protein</fullName>
    </alternativeName>
    <alternativeName>
        <fullName evidence="13">Peptidyl-tRNA hydrolase ICT1, mitochondrial</fullName>
        <ecNumber evidence="2">3.1.1.29</ecNumber>
    </alternativeName>
</protein>
<accession>Q14197</accession>
<accession>B2RAD1</accession>
<accession>Q53HM7</accession>
<accession>Q53Y11</accession>
<feature type="transit peptide" description="Mitochondrion" evidence="1">
    <location>
        <begin position="1"/>
        <end position="29"/>
    </location>
</feature>
<feature type="chain" id="PRO_0000030339" description="Large ribosomal subunit protein mL62">
    <location>
        <begin position="30"/>
        <end position="206"/>
    </location>
</feature>
<feature type="modified residue" description="N5-methylglutamine" evidence="9">
    <location>
        <position position="90"/>
    </location>
</feature>
<feature type="sequence variant" id="VAR_020045" description="In dbSNP:rs3744206.">
    <original>R</original>
    <variation>P</variation>
    <location>
        <position position="8"/>
    </location>
</feature>
<feature type="sequence variant" id="VAR_024604" description="In dbSNP:rs10512599.">
    <original>L</original>
    <variation>F</variation>
    <location>
        <position position="77"/>
    </location>
</feature>
<feature type="sequence variant" id="VAR_061767" description="In dbSNP:rs34496172.">
    <original>T</original>
    <variation>M</variation>
    <location>
        <position position="122"/>
    </location>
</feature>
<feature type="mutagenesis site" description="Strongly impairs peptide release activity." evidence="2">
    <original>G</original>
    <variation>A</variation>
    <location>
        <position position="88"/>
    </location>
</feature>
<feature type="mutagenesis site" description="Strongly impairs peptide release activity." evidence="2">
    <original>G</original>
    <variation>S</variation>
    <location>
        <position position="89"/>
    </location>
</feature>
<feature type="sequence conflict" description="In Ref. 4; BAD96273." evidence="13" ref="4">
    <original>K</original>
    <variation>R</variation>
    <location>
        <position position="94"/>
    </location>
</feature>
<feature type="helix" evidence="24">
    <location>
        <begin position="45"/>
        <end position="48"/>
    </location>
</feature>
<feature type="strand" evidence="24">
    <location>
        <begin position="49"/>
        <end position="51"/>
    </location>
</feature>
<feature type="helix" evidence="24">
    <location>
        <begin position="55"/>
        <end position="58"/>
    </location>
</feature>
<feature type="turn" evidence="24">
    <location>
        <begin position="74"/>
        <end position="76"/>
    </location>
</feature>
<feature type="strand" evidence="24">
    <location>
        <begin position="77"/>
        <end position="82"/>
    </location>
</feature>
<feature type="strand" evidence="24">
    <location>
        <begin position="97"/>
        <end position="105"/>
    </location>
</feature>
<feature type="strand" evidence="25">
    <location>
        <begin position="109"/>
        <end position="111"/>
    </location>
</feature>
<feature type="helix" evidence="24">
    <location>
        <begin position="113"/>
        <end position="122"/>
    </location>
</feature>
<feature type="helix" evidence="24">
    <location>
        <begin position="124"/>
        <end position="126"/>
    </location>
</feature>
<feature type="strand" evidence="24">
    <location>
        <begin position="131"/>
        <end position="141"/>
    </location>
</feature>
<feature type="helix" evidence="24">
    <location>
        <begin position="143"/>
        <end position="162"/>
    </location>
</feature>
<feature type="helix" evidence="24">
    <location>
        <begin position="175"/>
        <end position="188"/>
    </location>
</feature>
<reference key="1">
    <citation type="journal article" date="1995" name="Eur. J. Biochem.">
        <title>Identification of mRNAs that show modulated expression during colon carcinoma cell differentiation.</title>
        <authorList>
            <person name="van Belzen N."/>
            <person name="Diesveld M.P.G."/>
            <person name="van der Made A.C.J."/>
            <person name="Nozawa Y."/>
            <person name="Dinjens W.N.M."/>
            <person name="Vlietstra R."/>
            <person name="Trapman J."/>
            <person name="Bosman F.T."/>
        </authorList>
    </citation>
    <scope>NUCLEOTIDE SEQUENCE [MRNA]</scope>
    <scope>TISSUE SPECIFICITY</scope>
</reference>
<reference key="2">
    <citation type="submission" date="2003-05" db="EMBL/GenBank/DDBJ databases">
        <title>Cloning of human full-length CDSs in BD Creator(TM) system donor vector.</title>
        <authorList>
            <person name="Kalnine N."/>
            <person name="Chen X."/>
            <person name="Rolfs A."/>
            <person name="Halleck A."/>
            <person name="Hines L."/>
            <person name="Eisenstein S."/>
            <person name="Koundinya M."/>
            <person name="Raphael J."/>
            <person name="Moreira D."/>
            <person name="Kelley T."/>
            <person name="LaBaer J."/>
            <person name="Lin Y."/>
            <person name="Phelan M."/>
            <person name="Farmer A."/>
        </authorList>
    </citation>
    <scope>NUCLEOTIDE SEQUENCE [LARGE SCALE MRNA]</scope>
</reference>
<reference key="3">
    <citation type="journal article" date="2004" name="Nat. Genet.">
        <title>Complete sequencing and characterization of 21,243 full-length human cDNAs.</title>
        <authorList>
            <person name="Ota T."/>
            <person name="Suzuki Y."/>
            <person name="Nishikawa T."/>
            <person name="Otsuki T."/>
            <person name="Sugiyama T."/>
            <person name="Irie R."/>
            <person name="Wakamatsu A."/>
            <person name="Hayashi K."/>
            <person name="Sato H."/>
            <person name="Nagai K."/>
            <person name="Kimura K."/>
            <person name="Makita H."/>
            <person name="Sekine M."/>
            <person name="Obayashi M."/>
            <person name="Nishi T."/>
            <person name="Shibahara T."/>
            <person name="Tanaka T."/>
            <person name="Ishii S."/>
            <person name="Yamamoto J."/>
            <person name="Saito K."/>
            <person name="Kawai Y."/>
            <person name="Isono Y."/>
            <person name="Nakamura Y."/>
            <person name="Nagahari K."/>
            <person name="Murakami K."/>
            <person name="Yasuda T."/>
            <person name="Iwayanagi T."/>
            <person name="Wagatsuma M."/>
            <person name="Shiratori A."/>
            <person name="Sudo H."/>
            <person name="Hosoiri T."/>
            <person name="Kaku Y."/>
            <person name="Kodaira H."/>
            <person name="Kondo H."/>
            <person name="Sugawara M."/>
            <person name="Takahashi M."/>
            <person name="Kanda K."/>
            <person name="Yokoi T."/>
            <person name="Furuya T."/>
            <person name="Kikkawa E."/>
            <person name="Omura Y."/>
            <person name="Abe K."/>
            <person name="Kamihara K."/>
            <person name="Katsuta N."/>
            <person name="Sato K."/>
            <person name="Tanikawa M."/>
            <person name="Yamazaki M."/>
            <person name="Ninomiya K."/>
            <person name="Ishibashi T."/>
            <person name="Yamashita H."/>
            <person name="Murakawa K."/>
            <person name="Fujimori K."/>
            <person name="Tanai H."/>
            <person name="Kimata M."/>
            <person name="Watanabe M."/>
            <person name="Hiraoka S."/>
            <person name="Chiba Y."/>
            <person name="Ishida S."/>
            <person name="Ono Y."/>
            <person name="Takiguchi S."/>
            <person name="Watanabe S."/>
            <person name="Yosida M."/>
            <person name="Hotuta T."/>
            <person name="Kusano J."/>
            <person name="Kanehori K."/>
            <person name="Takahashi-Fujii A."/>
            <person name="Hara H."/>
            <person name="Tanase T.-O."/>
            <person name="Nomura Y."/>
            <person name="Togiya S."/>
            <person name="Komai F."/>
            <person name="Hara R."/>
            <person name="Takeuchi K."/>
            <person name="Arita M."/>
            <person name="Imose N."/>
            <person name="Musashino K."/>
            <person name="Yuuki H."/>
            <person name="Oshima A."/>
            <person name="Sasaki N."/>
            <person name="Aotsuka S."/>
            <person name="Yoshikawa Y."/>
            <person name="Matsunawa H."/>
            <person name="Ichihara T."/>
            <person name="Shiohata N."/>
            <person name="Sano S."/>
            <person name="Moriya S."/>
            <person name="Momiyama H."/>
            <person name="Satoh N."/>
            <person name="Takami S."/>
            <person name="Terashima Y."/>
            <person name="Suzuki O."/>
            <person name="Nakagawa S."/>
            <person name="Senoh A."/>
            <person name="Mizoguchi H."/>
            <person name="Goto Y."/>
            <person name="Shimizu F."/>
            <person name="Wakebe H."/>
            <person name="Hishigaki H."/>
            <person name="Watanabe T."/>
            <person name="Sugiyama A."/>
            <person name="Takemoto M."/>
            <person name="Kawakami B."/>
            <person name="Yamazaki M."/>
            <person name="Watanabe K."/>
            <person name="Kumagai A."/>
            <person name="Itakura S."/>
            <person name="Fukuzumi Y."/>
            <person name="Fujimori Y."/>
            <person name="Komiyama M."/>
            <person name="Tashiro H."/>
            <person name="Tanigami A."/>
            <person name="Fujiwara T."/>
            <person name="Ono T."/>
            <person name="Yamada K."/>
            <person name="Fujii Y."/>
            <person name="Ozaki K."/>
            <person name="Hirao M."/>
            <person name="Ohmori Y."/>
            <person name="Kawabata A."/>
            <person name="Hikiji T."/>
            <person name="Kobatake N."/>
            <person name="Inagaki H."/>
            <person name="Ikema Y."/>
            <person name="Okamoto S."/>
            <person name="Okitani R."/>
            <person name="Kawakami T."/>
            <person name="Noguchi S."/>
            <person name="Itoh T."/>
            <person name="Shigeta K."/>
            <person name="Senba T."/>
            <person name="Matsumura K."/>
            <person name="Nakajima Y."/>
            <person name="Mizuno T."/>
            <person name="Morinaga M."/>
            <person name="Sasaki M."/>
            <person name="Togashi T."/>
            <person name="Oyama M."/>
            <person name="Hata H."/>
            <person name="Watanabe M."/>
            <person name="Komatsu T."/>
            <person name="Mizushima-Sugano J."/>
            <person name="Satoh T."/>
            <person name="Shirai Y."/>
            <person name="Takahashi Y."/>
            <person name="Nakagawa K."/>
            <person name="Okumura K."/>
            <person name="Nagase T."/>
            <person name="Nomura N."/>
            <person name="Kikuchi H."/>
            <person name="Masuho Y."/>
            <person name="Yamashita R."/>
            <person name="Nakai K."/>
            <person name="Yada T."/>
            <person name="Nakamura Y."/>
            <person name="Ohara O."/>
            <person name="Isogai T."/>
            <person name="Sugano S."/>
        </authorList>
    </citation>
    <scope>NUCLEOTIDE SEQUENCE [LARGE SCALE MRNA]</scope>
    <source>
        <tissue>Tongue</tissue>
    </source>
</reference>
<reference key="4">
    <citation type="submission" date="2005-04" db="EMBL/GenBank/DDBJ databases">
        <authorList>
            <person name="Suzuki Y."/>
            <person name="Sugano S."/>
            <person name="Totoki Y."/>
            <person name="Toyoda A."/>
            <person name="Takeda T."/>
            <person name="Sakaki Y."/>
            <person name="Tanaka A."/>
            <person name="Yokoyama S."/>
        </authorList>
    </citation>
    <scope>NUCLEOTIDE SEQUENCE [LARGE SCALE MRNA]</scope>
    <source>
        <tissue>Adipose tissue</tissue>
    </source>
</reference>
<reference key="5">
    <citation type="submission" date="2005-07" db="EMBL/GenBank/DDBJ databases">
        <authorList>
            <person name="Mural R.J."/>
            <person name="Istrail S."/>
            <person name="Sutton G.G."/>
            <person name="Florea L."/>
            <person name="Halpern A.L."/>
            <person name="Mobarry C.M."/>
            <person name="Lippert R."/>
            <person name="Walenz B."/>
            <person name="Shatkay H."/>
            <person name="Dew I."/>
            <person name="Miller J.R."/>
            <person name="Flanigan M.J."/>
            <person name="Edwards N.J."/>
            <person name="Bolanos R."/>
            <person name="Fasulo D."/>
            <person name="Halldorsson B.V."/>
            <person name="Hannenhalli S."/>
            <person name="Turner R."/>
            <person name="Yooseph S."/>
            <person name="Lu F."/>
            <person name="Nusskern D.R."/>
            <person name="Shue B.C."/>
            <person name="Zheng X.H."/>
            <person name="Zhong F."/>
            <person name="Delcher A.L."/>
            <person name="Huson D.H."/>
            <person name="Kravitz S.A."/>
            <person name="Mouchard L."/>
            <person name="Reinert K."/>
            <person name="Remington K.A."/>
            <person name="Clark A.G."/>
            <person name="Waterman M.S."/>
            <person name="Eichler E.E."/>
            <person name="Adams M.D."/>
            <person name="Hunkapiller M.W."/>
            <person name="Myers E.W."/>
            <person name="Venter J.C."/>
        </authorList>
    </citation>
    <scope>NUCLEOTIDE SEQUENCE [LARGE SCALE GENOMIC DNA]</scope>
</reference>
<reference key="6">
    <citation type="journal article" date="2004" name="Genome Res.">
        <title>The status, quality, and expansion of the NIH full-length cDNA project: the Mammalian Gene Collection (MGC).</title>
        <authorList>
            <consortium name="The MGC Project Team"/>
        </authorList>
    </citation>
    <scope>NUCLEOTIDE SEQUENCE [LARGE SCALE MRNA]</scope>
    <source>
        <tissue>Lymph</tissue>
    </source>
</reference>
<reference key="7">
    <citation type="journal article" date="2010" name="EMBO J.">
        <title>A functional peptidyl-tRNA hydrolase, ICT1, has been recruited into the human mitochondrial ribosome.</title>
        <authorList>
            <person name="Richter R."/>
            <person name="Rorbach J."/>
            <person name="Pajak A."/>
            <person name="Smith P.M."/>
            <person name="Wessels H.J."/>
            <person name="Huynen M.A."/>
            <person name="Smeitink J.A."/>
            <person name="Lightowlers R.N."/>
            <person name="Chrzanowska-Lightowlers Z.M."/>
        </authorList>
    </citation>
    <scope>FUNCTION</scope>
    <scope>IDENTIFICATION IN THE MITOCHONDRIAL 39S RIBOSOMAL SUBUNIT</scope>
    <scope>SUBCELLULAR LOCATION</scope>
    <scope>MUTAGENESIS OF GLY-88 AND GLY-89</scope>
    <scope>CATALYTIC ACTIVITY</scope>
</reference>
<reference key="8">
    <citation type="journal article" date="2011" name="BMC Syst. Biol.">
        <title>Initial characterization of the human central proteome.</title>
        <authorList>
            <person name="Burkard T.R."/>
            <person name="Planyavsky M."/>
            <person name="Kaupe I."/>
            <person name="Breitwieser F.P."/>
            <person name="Buerckstuemmer T."/>
            <person name="Bennett K.L."/>
            <person name="Superti-Furga G."/>
            <person name="Colinge J."/>
        </authorList>
    </citation>
    <scope>IDENTIFICATION BY MASS SPECTROMETRY [LARGE SCALE ANALYSIS]</scope>
</reference>
<reference key="9">
    <citation type="journal article" date="2013" name="Front. Physiol.">
        <title>Identification and characterization of CHCHD1, AURKAIP1, and CRIF1 as new members of the mammalian mitochondrial ribosome.</title>
        <authorList>
            <person name="Koc E.C."/>
            <person name="Cimen H."/>
            <person name="Kumcuoglu B."/>
            <person name="Abu N."/>
            <person name="Akpinar G."/>
            <person name="Haque M.E."/>
            <person name="Spremulli L.L."/>
            <person name="Koc H."/>
        </authorList>
    </citation>
    <scope>SUBUNIT</scope>
    <scope>SUBCELLULAR LOCATION</scope>
</reference>
<reference key="10">
    <citation type="journal article" date="2013" name="Nat. Commun.">
        <title>Codon-reading specificities of mitochondrial release factors and translation termination at non-standard stop codons.</title>
        <authorList>
            <person name="Lind C."/>
            <person name="Sund J."/>
            <person name="Aqvist J."/>
        </authorList>
    </citation>
    <scope>CAUTION</scope>
</reference>
<reference key="11">
    <citation type="journal article" date="2015" name="Proteomics">
        <title>N-terminome analysis of the human mitochondrial proteome.</title>
        <authorList>
            <person name="Vaca Jacome A.S."/>
            <person name="Rabilloud T."/>
            <person name="Schaeffer-Reiss C."/>
            <person name="Rompais M."/>
            <person name="Ayoub D."/>
            <person name="Lane L."/>
            <person name="Bairoch A."/>
            <person name="Van Dorsselaer A."/>
            <person name="Carapito C."/>
        </authorList>
    </citation>
    <scope>IDENTIFICATION BY MASS SPECTROMETRY [LARGE SCALE ANALYSIS]</scope>
</reference>
<reference key="12">
    <citation type="journal article" date="2016" name="Annu. Rev. Biochem.">
        <title>Structure and function of the mitochondrial ribosome.</title>
        <authorList>
            <person name="Greber B.J."/>
            <person name="Ban N."/>
        </authorList>
    </citation>
    <scope>NOMENCLATURE</scope>
</reference>
<reference key="13">
    <citation type="journal article" date="2022" name="Sci. Rep.">
        <title>Mammalian HEMK1 methylates glutamine residue of the GGQ motif of mitochondrial release factors.</title>
        <authorList>
            <person name="Fang Q."/>
            <person name="Kimura Y."/>
            <person name="Shimazu T."/>
            <person name="Suzuki T."/>
            <person name="Yamada A."/>
            <person name="Dohmae N."/>
            <person name="Iwasaki S."/>
            <person name="Shinkai Y."/>
        </authorList>
    </citation>
    <scope>METHYLATION AT GLN-90</scope>
</reference>
<reference key="14">
    <citation type="journal article" date="2023" name="Science">
        <title>Molecular basis of translation termination at noncanonical stop codons in human mitochondria.</title>
        <authorList>
            <person name="Saurer M."/>
            <person name="Leibundgut M."/>
            <person name="Nadimpalli H.P."/>
            <person name="Scaiola A."/>
            <person name="Schoenhut T."/>
            <person name="Lee R.G."/>
            <person name="Siira S.J."/>
            <person name="Rackham O."/>
            <person name="Dreos R."/>
            <person name="Lenarcic T."/>
            <person name="Kummer E."/>
            <person name="Gatfield D."/>
            <person name="Filipovska A."/>
            <person name="Ban N."/>
        </authorList>
    </citation>
    <scope>CAUTION</scope>
</reference>
<reference evidence="17" key="15">
    <citation type="journal article" date="2014" name="Science">
        <title>Structure of the large ribosomal subunit from human mitochondria.</title>
        <authorList>
            <person name="Brown A."/>
            <person name="Amunts A."/>
            <person name="Bai X.C."/>
            <person name="Sugimoto Y."/>
            <person name="Edwards P.C."/>
            <person name="Murshudov G."/>
            <person name="Scheres S.H."/>
            <person name="Ramakrishnan V."/>
        </authorList>
    </citation>
    <scope>STRUCTURE BY ELECTRON MICROSCOPY (3.40 ANGSTROMS)</scope>
    <scope>SUBCELLULAR LOCATION</scope>
    <scope>SUBUNIT</scope>
</reference>
<reference evidence="18" key="16">
    <citation type="journal article" date="2015" name="Science">
        <title>Ribosome. The structure of the human mitochondrial ribosome.</title>
        <authorList>
            <person name="Amunts A."/>
            <person name="Brown A."/>
            <person name="Toots J."/>
            <person name="Scheres S.H."/>
            <person name="Ramakrishnan V."/>
        </authorList>
    </citation>
    <scope>STRUCTURE BY ELECTRON MICROSCOPY (3.50 ANGSTROMS)</scope>
    <scope>SUBCELLULAR LOCATION</scope>
    <scope>SUBUNIT</scope>
</reference>
<reference evidence="19 20" key="17">
    <citation type="journal article" date="2017" name="Nat. Struct. Mol. Biol.">
        <title>Structures of the human mitochondrial ribosome in native states of assembly.</title>
        <authorList>
            <person name="Brown A."/>
            <person name="Rathore S."/>
            <person name="Kimanius D."/>
            <person name="Aibara S."/>
            <person name="Bai X.C."/>
            <person name="Rorbach J."/>
            <person name="Amunts A."/>
            <person name="Ramakrishnan V."/>
        </authorList>
    </citation>
    <scope>STRUCTURE BY ELECTRON MICROSCOPY (3.03 ANGSTROMS)</scope>
    <scope>SUBCELLULAR LOCATION</scope>
    <scope>SUBUNIT</scope>
</reference>
<reference evidence="21" key="18">
    <citation type="journal article" date="2021" name="Mol. Cell">
        <title>Structural basis of translation termination, rescue, and recycling in mammalian mitochondria.</title>
        <authorList>
            <person name="Kummer E."/>
            <person name="Schubert K.N."/>
            <person name="Schoenhut T."/>
            <person name="Scaiola A."/>
            <person name="Ban N."/>
        </authorList>
    </citation>
    <scope>STRUCTURE BY ELECTRON MICROSCOPY (3.40 ANGSTROMS) OF 30-206 IN COMPLEX WITH MITOCHONDRIAL RIBOSOME</scope>
    <scope>FUNCTION</scope>
</reference>
<reference evidence="22 23" key="19">
    <citation type="journal article" date="2022" name="Nat. Commun.">
        <title>A late-stage assembly checkpoint of the human mitochondrial ribosome large subunit.</title>
        <authorList>
            <person name="Rebelo-Guiomar P."/>
            <person name="Pellegrino S."/>
            <person name="Dent K.C."/>
            <person name="Sas-Chen A."/>
            <person name="Miller-Fleming L."/>
            <person name="Garone C."/>
            <person name="Van Haute L."/>
            <person name="Rogan J.F."/>
            <person name="Dinan A."/>
            <person name="Firth A.E."/>
            <person name="Andrews B."/>
            <person name="Whitworth A.J."/>
            <person name="Schwartz S."/>
            <person name="Warren A.J."/>
            <person name="Minczuk M."/>
        </authorList>
    </citation>
    <scope>STRUCTURE BY ELECTRON MICROSCOPY (2.9 ANGSTROMS) IN COMPLEX WITH MTLSU</scope>
    <scope>SUBUNIT</scope>
</reference>
<name>ICT1_HUMAN</name>
<gene>
    <name evidence="16" type="primary">MRPL58</name>
    <name type="synonym">DS1</name>
    <name type="synonym">ICT1</name>
</gene>
<comment type="function">
    <text evidence="2 7">Essential peptidyl-tRNA hydrolase component of the mitochondrial large ribosomal subunit (PubMed:20186120, PubMed:33878294). Acts as a codon-independent translation release factor that has lost all stop codon specificity and directs the termination of translation in mitochondrion, possibly in case of abortive elongation (PubMed:33878294). Involved in the hydrolysis of peptidyl-tRNAs that have been prematurely terminated and thus in the recycling of stalled mitochondrial ribosomes (PubMed:20186120, PubMed:33878294).</text>
</comment>
<comment type="catalytic activity">
    <reaction evidence="2">
        <text>an N-acyl-L-alpha-aminoacyl-tRNA + H2O = an N-acyl-L-amino acid + a tRNA + H(+)</text>
        <dbReference type="Rhea" id="RHEA:54448"/>
        <dbReference type="Rhea" id="RHEA-COMP:10123"/>
        <dbReference type="Rhea" id="RHEA-COMP:13883"/>
        <dbReference type="ChEBI" id="CHEBI:15377"/>
        <dbReference type="ChEBI" id="CHEBI:15378"/>
        <dbReference type="ChEBI" id="CHEBI:59874"/>
        <dbReference type="ChEBI" id="CHEBI:78442"/>
        <dbReference type="ChEBI" id="CHEBI:138191"/>
        <dbReference type="EC" id="3.1.1.29"/>
    </reaction>
    <physiologicalReaction direction="left-to-right" evidence="14">
        <dbReference type="Rhea" id="RHEA:54449"/>
    </physiologicalReaction>
</comment>
<comment type="subunit">
    <text evidence="2 3 4 5 6 8">Component of the mitochondrial large ribosomal subunit (mt-LSU) (PubMed:20186120, PubMed:25278503, PubMed:25838379, PubMed:28892042, PubMed:35177605). Mature mammalian 55S mitochondrial ribosomes consist of a small (28S) and a large (39S) subunit. The 28S small subunit contains a 12S ribosomal RNA (12S mt-rRNA) and 30 different proteins. The 39S large subunit contains a 16S rRNA (16S mt-rRNA), a copy of mitochondrial valine transfer RNA (mt-tRNA(Val)), which plays an integral structural role, and 52 different proteins.</text>
</comment>
<comment type="subcellular location">
    <subcellularLocation>
        <location evidence="2 3 4 5 6">Mitochondrion</location>
    </subcellularLocation>
</comment>
<comment type="tissue specificity">
    <text evidence="11">Down-regulated during the in vitro differentiation of HT29-D4 colon carcinoma cells.</text>
</comment>
<comment type="PTM">
    <text evidence="9">Methylation of glutamine in the GGQ triplet by HEMK1.</text>
</comment>
<comment type="similarity">
    <text evidence="13">Belongs to the prokaryotic/mitochondrial release factor family. Mitochondrion-specific ribosomal protein mL62 subfamily.</text>
</comment>
<comment type="caution">
    <text evidence="10 15">Was initially thought to promote the termination of non-canonical termination stop codons AGG and AGA (PubMed:24352605). However, it was later shown that termination of non-canonical termination stop codons is mediated by MTRF1 (PubMed:37141370).</text>
</comment>
<comment type="caution">
    <text evidence="13">In contrast to other members of the family, lacks the regions that come into close contact with the mRNA in the ribosomal A-site and determine the STOP codon specificity, explaining the loss of codon specificity for translation release factor activity.</text>
</comment>
<proteinExistence type="evidence at protein level"/>
<sequence>MAATRCLRWGLSRAGVWLLPPPARCPRRALHKQKDGTEFKSIYSLDKLYPESQGSDTAWRVPNGAKQADSDIPLDRLTISYCRSSGPGGQNVNKVNSKAEVRFHLATAEWIAEPVRQKIAITHKNKINRLGELILTSESSRYQFRNLADCLQKIRDMITEASQTPKEPTKEDVKLHRIRIENMNRERLRQKRIHSAVKTSRRVDMD</sequence>
<evidence type="ECO:0000255" key="1"/>
<evidence type="ECO:0000269" key="2">
    <source>
    </source>
</evidence>
<evidence type="ECO:0000269" key="3">
    <source>
    </source>
</evidence>
<evidence type="ECO:0000269" key="4">
    <source>
    </source>
</evidence>
<evidence type="ECO:0000269" key="5">
    <source>
    </source>
</evidence>
<evidence type="ECO:0000269" key="6">
    <source>
    </source>
</evidence>
<evidence type="ECO:0000269" key="7">
    <source>
    </source>
</evidence>
<evidence type="ECO:0000269" key="8">
    <source>
    </source>
</evidence>
<evidence type="ECO:0000269" key="9">
    <source>
    </source>
</evidence>
<evidence type="ECO:0000269" key="10">
    <source>
    </source>
</evidence>
<evidence type="ECO:0000269" key="11">
    <source>
    </source>
</evidence>
<evidence type="ECO:0000303" key="12">
    <source>
    </source>
</evidence>
<evidence type="ECO:0000305" key="13"/>
<evidence type="ECO:0000305" key="14">
    <source>
    </source>
</evidence>
<evidence type="ECO:0000305" key="15">
    <source>
    </source>
</evidence>
<evidence type="ECO:0000312" key="16">
    <source>
        <dbReference type="HGNC" id="HGNC:5359"/>
    </source>
</evidence>
<evidence type="ECO:0007744" key="17">
    <source>
        <dbReference type="PDB" id="3J7Y"/>
    </source>
</evidence>
<evidence type="ECO:0007744" key="18">
    <source>
        <dbReference type="PDB" id="3J9M"/>
    </source>
</evidence>
<evidence type="ECO:0007744" key="19">
    <source>
        <dbReference type="PDB" id="5OOL"/>
    </source>
</evidence>
<evidence type="ECO:0007744" key="20">
    <source>
        <dbReference type="PDB" id="5OOM"/>
    </source>
</evidence>
<evidence type="ECO:0007744" key="21">
    <source>
        <dbReference type="PDB" id="7NQL"/>
    </source>
</evidence>
<evidence type="ECO:0007744" key="22">
    <source>
        <dbReference type="PDB" id="7QH6"/>
    </source>
</evidence>
<evidence type="ECO:0007744" key="23">
    <source>
        <dbReference type="PDB" id="7QH7"/>
    </source>
</evidence>
<evidence type="ECO:0007829" key="24">
    <source>
        <dbReference type="PDB" id="7OF0"/>
    </source>
</evidence>
<evidence type="ECO:0007829" key="25">
    <source>
        <dbReference type="PDB" id="7QH7"/>
    </source>
</evidence>